<feature type="transit peptide" description="Chloroplast" evidence="2">
    <location>
        <begin position="1"/>
        <end status="unknown"/>
    </location>
</feature>
<feature type="chain" id="PRO_0000006034" description="Oxygen-dependent coproporphyrinogen-III oxidase, chloroplastic">
    <location>
        <begin status="unknown"/>
        <end position="397"/>
    </location>
</feature>
<feature type="region of interest" description="Disordered" evidence="3">
    <location>
        <begin position="76"/>
        <end position="95"/>
    </location>
</feature>
<feature type="region of interest" description="Important for dimerization" evidence="1">
    <location>
        <begin position="135"/>
        <end position="144"/>
    </location>
</feature>
<feature type="region of interest" description="Important for dimerization" evidence="1">
    <location>
        <begin position="337"/>
        <end position="372"/>
    </location>
</feature>
<feature type="compositionally biased region" description="Polar residues" evidence="3">
    <location>
        <begin position="79"/>
        <end position="90"/>
    </location>
</feature>
<feature type="active site" description="Proton donor" evidence="1">
    <location>
        <position position="199"/>
    </location>
</feature>
<feature type="binding site" evidence="1">
    <location>
        <position position="185"/>
    </location>
    <ligand>
        <name>substrate</name>
    </ligand>
</feature>
<feature type="binding site" evidence="1">
    <location>
        <begin position="201"/>
        <end position="203"/>
    </location>
    <ligand>
        <name>substrate</name>
    </ligand>
</feature>
<feature type="binding site" evidence="1">
    <location>
        <begin position="355"/>
        <end position="360"/>
    </location>
    <ligand>
        <name>substrate</name>
    </ligand>
</feature>
<feature type="site" description="Important for dimerization" evidence="1">
    <location>
        <position position="272"/>
    </location>
</feature>
<organism>
    <name type="scientific">Nicotiana tabacum</name>
    <name type="common">Common tobacco</name>
    <dbReference type="NCBI Taxonomy" id="4097"/>
    <lineage>
        <taxon>Eukaryota</taxon>
        <taxon>Viridiplantae</taxon>
        <taxon>Streptophyta</taxon>
        <taxon>Embryophyta</taxon>
        <taxon>Tracheophyta</taxon>
        <taxon>Spermatophyta</taxon>
        <taxon>Magnoliopsida</taxon>
        <taxon>eudicotyledons</taxon>
        <taxon>Gunneridae</taxon>
        <taxon>Pentapetalae</taxon>
        <taxon>asterids</taxon>
        <taxon>lamiids</taxon>
        <taxon>Solanales</taxon>
        <taxon>Solanaceae</taxon>
        <taxon>Nicotianoideae</taxon>
        <taxon>Nicotianeae</taxon>
        <taxon>Nicotiana</taxon>
    </lineage>
</organism>
<protein>
    <recommendedName>
        <fullName>Oxygen-dependent coproporphyrinogen-III oxidase, chloroplastic</fullName>
        <shortName>Coprogen oxidase</shortName>
        <shortName>Coproporphyrinogenase</shortName>
        <ecNumber>1.3.3.3</ecNumber>
    </recommendedName>
</protein>
<keyword id="KW-0149">Chlorophyll biosynthesis</keyword>
<keyword id="KW-0150">Chloroplast</keyword>
<keyword id="KW-0350">Heme biosynthesis</keyword>
<keyword id="KW-0560">Oxidoreductase</keyword>
<keyword id="KW-0934">Plastid</keyword>
<keyword id="KW-0627">Porphyrin biosynthesis</keyword>
<keyword id="KW-1185">Reference proteome</keyword>
<keyword id="KW-0809">Transit peptide</keyword>
<accession>Q42946</accession>
<evidence type="ECO:0000250" key="1"/>
<evidence type="ECO:0000255" key="2"/>
<evidence type="ECO:0000256" key="3">
    <source>
        <dbReference type="SAM" id="MobiDB-lite"/>
    </source>
</evidence>
<evidence type="ECO:0000305" key="4"/>
<comment type="function">
    <text evidence="1">Involved in the heme and chlorophyll biosynthesis. Catalyzes the aerobic oxidative decarboxylation of propionate groups of rings A and B of coproporphyrinogen-III to yield the vinyl groups in protoporphyrinogen-IX (By similarity).</text>
</comment>
<comment type="catalytic activity">
    <reaction>
        <text>coproporphyrinogen III + O2 + 2 H(+) = protoporphyrinogen IX + 2 CO2 + 2 H2O</text>
        <dbReference type="Rhea" id="RHEA:18257"/>
        <dbReference type="ChEBI" id="CHEBI:15377"/>
        <dbReference type="ChEBI" id="CHEBI:15378"/>
        <dbReference type="ChEBI" id="CHEBI:15379"/>
        <dbReference type="ChEBI" id="CHEBI:16526"/>
        <dbReference type="ChEBI" id="CHEBI:57307"/>
        <dbReference type="ChEBI" id="CHEBI:57309"/>
        <dbReference type="EC" id="1.3.3.3"/>
    </reaction>
</comment>
<comment type="pathway">
    <text>Porphyrin-containing compound metabolism; protoporphyrin-IX biosynthesis; protoporphyrinogen-IX from coproporphyrinogen-III (O2 route): step 1/1.</text>
</comment>
<comment type="subunit">
    <text evidence="1">Homodimer.</text>
</comment>
<comment type="subcellular location">
    <subcellularLocation>
        <location evidence="4">Plastid</location>
        <location evidence="4">Chloroplast</location>
    </subcellularLocation>
</comment>
<comment type="similarity">
    <text evidence="4">Belongs to the aerobic coproporphyrinogen-III oxidase family.</text>
</comment>
<proteinExistence type="evidence at transcript level"/>
<gene>
    <name type="primary">CPX</name>
</gene>
<sequence>MLTPILSSASCSWTPTSQFPHSWHSSPSFLTKPLNLPFTESYKTAKRPTPNYSFKVQAMIEKEVAVSHKPDAFLRESDMGSNVTSNSSSVRGRFEKMRREAQDSVCLAIEKADGGAKFKEDVWSRPGGGGGHSSVLQDGAVFEKAGVNVSVVYGVMPPEAYRAARPTDNGNVKPGPIPFFAAGVSSVLHPKNPFAPTLHFNYRYFETDAPKDAPGAPRQWWFGGGTDFTPAYIFEEDVKHFHSVQKAACDKFDASFYPRFKKWCVDYFYIKHRDERRGLGGIFFDDFNDYDQEMLLSFSTECANSVIPAYIPIVEKRKDTPFTDKHKAWQQLRRGRYVEFNLVYDRGTTFGLKTGGRIESILVSLPLTARWEYDHKPEEGTEEWKLLDACINPKEWI</sequence>
<name>HEM6_TOBAC</name>
<dbReference type="EC" id="1.3.3.3"/>
<dbReference type="EMBL" id="X82831">
    <property type="protein sequence ID" value="CAA58038.1"/>
    <property type="molecule type" value="mRNA"/>
</dbReference>
<dbReference type="PIR" id="T02929">
    <property type="entry name" value="T02929"/>
</dbReference>
<dbReference type="RefSeq" id="NP_001312882.1">
    <property type="nucleotide sequence ID" value="NM_001325953.1"/>
</dbReference>
<dbReference type="SMR" id="Q42946"/>
<dbReference type="STRING" id="4097.Q42946"/>
<dbReference type="PaxDb" id="4097-Q42946"/>
<dbReference type="GeneID" id="107815524"/>
<dbReference type="KEGG" id="nta:107815524"/>
<dbReference type="OrthoDB" id="15318at2759"/>
<dbReference type="UniPathway" id="UPA00251">
    <property type="reaction ID" value="UER00322"/>
</dbReference>
<dbReference type="Proteomes" id="UP000084051">
    <property type="component" value="Unplaced"/>
</dbReference>
<dbReference type="GO" id="GO:0009507">
    <property type="term" value="C:chloroplast"/>
    <property type="evidence" value="ECO:0007669"/>
    <property type="project" value="UniProtKB-SubCell"/>
</dbReference>
<dbReference type="GO" id="GO:0005737">
    <property type="term" value="C:cytoplasm"/>
    <property type="evidence" value="ECO:0000318"/>
    <property type="project" value="GO_Central"/>
</dbReference>
<dbReference type="GO" id="GO:0004109">
    <property type="term" value="F:coproporphyrinogen oxidase activity"/>
    <property type="evidence" value="ECO:0000318"/>
    <property type="project" value="GO_Central"/>
</dbReference>
<dbReference type="GO" id="GO:0042803">
    <property type="term" value="F:protein homodimerization activity"/>
    <property type="evidence" value="ECO:0000250"/>
    <property type="project" value="UniProtKB"/>
</dbReference>
<dbReference type="GO" id="GO:0015995">
    <property type="term" value="P:chlorophyll biosynthetic process"/>
    <property type="evidence" value="ECO:0007669"/>
    <property type="project" value="UniProtKB-KW"/>
</dbReference>
<dbReference type="GO" id="GO:0006782">
    <property type="term" value="P:protoporphyrinogen IX biosynthetic process"/>
    <property type="evidence" value="ECO:0000318"/>
    <property type="project" value="GO_Central"/>
</dbReference>
<dbReference type="FunFam" id="3.40.1500.10:FF:000003">
    <property type="entry name" value="oxygen-dependent coproporphyrinogen-III oxidase, chloroplastic"/>
    <property type="match status" value="1"/>
</dbReference>
<dbReference type="Gene3D" id="3.40.1500.10">
    <property type="entry name" value="Coproporphyrinogen III oxidase, aerobic"/>
    <property type="match status" value="1"/>
</dbReference>
<dbReference type="InterPro" id="IPR001260">
    <property type="entry name" value="Coprogen_oxidase_aer"/>
</dbReference>
<dbReference type="InterPro" id="IPR036406">
    <property type="entry name" value="Coprogen_oxidase_aer_sf"/>
</dbReference>
<dbReference type="InterPro" id="IPR018375">
    <property type="entry name" value="Coprogen_oxidase_CS"/>
</dbReference>
<dbReference type="NCBIfam" id="NF003727">
    <property type="entry name" value="PRK05330.1"/>
    <property type="match status" value="1"/>
</dbReference>
<dbReference type="PANTHER" id="PTHR10755">
    <property type="entry name" value="COPROPORPHYRINOGEN III OXIDASE, MITOCHONDRIAL"/>
    <property type="match status" value="1"/>
</dbReference>
<dbReference type="PANTHER" id="PTHR10755:SF0">
    <property type="entry name" value="OXYGEN-DEPENDENT COPROPORPHYRINOGEN-III OXIDASE, MITOCHONDRIAL"/>
    <property type="match status" value="1"/>
</dbReference>
<dbReference type="Pfam" id="PF01218">
    <property type="entry name" value="Coprogen_oxidas"/>
    <property type="match status" value="1"/>
</dbReference>
<dbReference type="PIRSF" id="PIRSF000166">
    <property type="entry name" value="Coproporphyri_ox"/>
    <property type="match status" value="1"/>
</dbReference>
<dbReference type="PRINTS" id="PR00073">
    <property type="entry name" value="COPRGNOXDASE"/>
</dbReference>
<dbReference type="SUPFAM" id="SSF102886">
    <property type="entry name" value="Coproporphyrinogen III oxidase"/>
    <property type="match status" value="1"/>
</dbReference>
<dbReference type="PROSITE" id="PS01021">
    <property type="entry name" value="COPROGEN_OXIDASE"/>
    <property type="match status" value="1"/>
</dbReference>
<reference key="1">
    <citation type="journal article" date="1995" name="Planta">
        <title>Coproporphyrinogen III oxidase from barley and tobacco -- sequence analysis and initial expression studies.</title>
        <authorList>
            <person name="Kruse E."/>
            <person name="Mock H.-P."/>
            <person name="Grimm B."/>
        </authorList>
    </citation>
    <scope>NUCLEOTIDE SEQUENCE [MRNA]</scope>
    <source>
        <strain>cv. SR1</strain>
        <tissue>Leaf</tissue>
    </source>
</reference>